<sequence length="119" mass="13097">MKIALIAHDKKKEEMIELAKDFEDKLSKHILVATGTTGLKIMQNTSLEVKRCKSGPLGGDQEIGAMVANHDVDMVIFLRDPLTAQPHEPDISALLRLCDVYKVPLATNTESAKLIMADI</sequence>
<name>MGSA_CLOPS</name>
<protein>
    <recommendedName>
        <fullName evidence="1">Methylglyoxal synthase</fullName>
        <shortName evidence="1">MGS</shortName>
        <ecNumber evidence="1">4.2.3.3</ecNumber>
    </recommendedName>
</protein>
<organism>
    <name type="scientific">Clostridium perfringens (strain SM101 / Type A)</name>
    <dbReference type="NCBI Taxonomy" id="289380"/>
    <lineage>
        <taxon>Bacteria</taxon>
        <taxon>Bacillati</taxon>
        <taxon>Bacillota</taxon>
        <taxon>Clostridia</taxon>
        <taxon>Eubacteriales</taxon>
        <taxon>Clostridiaceae</taxon>
        <taxon>Clostridium</taxon>
    </lineage>
</organism>
<evidence type="ECO:0000255" key="1">
    <source>
        <dbReference type="HAMAP-Rule" id="MF_00549"/>
    </source>
</evidence>
<gene>
    <name evidence="1" type="primary">mgsA</name>
    <name type="ordered locus">CPR_1077</name>
</gene>
<dbReference type="EC" id="4.2.3.3" evidence="1"/>
<dbReference type="EMBL" id="CP000312">
    <property type="protein sequence ID" value="ABG85454.1"/>
    <property type="molecule type" value="Genomic_DNA"/>
</dbReference>
<dbReference type="RefSeq" id="WP_003448652.1">
    <property type="nucleotide sequence ID" value="NC_008262.1"/>
</dbReference>
<dbReference type="SMR" id="Q0SU08"/>
<dbReference type="KEGG" id="cpr:CPR_1077"/>
<dbReference type="Proteomes" id="UP000001824">
    <property type="component" value="Chromosome"/>
</dbReference>
<dbReference type="GO" id="GO:0005829">
    <property type="term" value="C:cytosol"/>
    <property type="evidence" value="ECO:0007669"/>
    <property type="project" value="TreeGrafter"/>
</dbReference>
<dbReference type="GO" id="GO:0008929">
    <property type="term" value="F:methylglyoxal synthase activity"/>
    <property type="evidence" value="ECO:0007669"/>
    <property type="project" value="UniProtKB-UniRule"/>
</dbReference>
<dbReference type="GO" id="GO:0019242">
    <property type="term" value="P:methylglyoxal biosynthetic process"/>
    <property type="evidence" value="ECO:0007669"/>
    <property type="project" value="UniProtKB-UniRule"/>
</dbReference>
<dbReference type="CDD" id="cd01422">
    <property type="entry name" value="MGS"/>
    <property type="match status" value="1"/>
</dbReference>
<dbReference type="Gene3D" id="3.40.50.1380">
    <property type="entry name" value="Methylglyoxal synthase-like domain"/>
    <property type="match status" value="1"/>
</dbReference>
<dbReference type="HAMAP" id="MF_00549">
    <property type="entry name" value="Methylglyoxal_synth"/>
    <property type="match status" value="1"/>
</dbReference>
<dbReference type="InterPro" id="IPR004363">
    <property type="entry name" value="Methylgl_synth"/>
</dbReference>
<dbReference type="InterPro" id="IPR018148">
    <property type="entry name" value="Methylglyoxal_synth_AS"/>
</dbReference>
<dbReference type="InterPro" id="IPR011607">
    <property type="entry name" value="MGS-like_dom"/>
</dbReference>
<dbReference type="InterPro" id="IPR036914">
    <property type="entry name" value="MGS-like_dom_sf"/>
</dbReference>
<dbReference type="NCBIfam" id="TIGR00160">
    <property type="entry name" value="MGSA"/>
    <property type="match status" value="1"/>
</dbReference>
<dbReference type="NCBIfam" id="NF003559">
    <property type="entry name" value="PRK05234.1"/>
    <property type="match status" value="1"/>
</dbReference>
<dbReference type="PANTHER" id="PTHR30492">
    <property type="entry name" value="METHYLGLYOXAL SYNTHASE"/>
    <property type="match status" value="1"/>
</dbReference>
<dbReference type="PANTHER" id="PTHR30492:SF0">
    <property type="entry name" value="METHYLGLYOXAL SYNTHASE"/>
    <property type="match status" value="1"/>
</dbReference>
<dbReference type="Pfam" id="PF02142">
    <property type="entry name" value="MGS"/>
    <property type="match status" value="1"/>
</dbReference>
<dbReference type="PIRSF" id="PIRSF006614">
    <property type="entry name" value="Methylglyox_syn"/>
    <property type="match status" value="1"/>
</dbReference>
<dbReference type="SMART" id="SM00851">
    <property type="entry name" value="MGS"/>
    <property type="match status" value="1"/>
</dbReference>
<dbReference type="SUPFAM" id="SSF52335">
    <property type="entry name" value="Methylglyoxal synthase-like"/>
    <property type="match status" value="1"/>
</dbReference>
<dbReference type="PROSITE" id="PS01335">
    <property type="entry name" value="METHYLGLYOXAL_SYNTH"/>
    <property type="match status" value="1"/>
</dbReference>
<dbReference type="PROSITE" id="PS51855">
    <property type="entry name" value="MGS"/>
    <property type="match status" value="1"/>
</dbReference>
<proteinExistence type="inferred from homology"/>
<feature type="chain" id="PRO_1000017806" description="Methylglyoxal synthase">
    <location>
        <begin position="1"/>
        <end position="119"/>
    </location>
</feature>
<feature type="domain" description="MGS-like" evidence="1">
    <location>
        <begin position="1"/>
        <end position="119"/>
    </location>
</feature>
<feature type="active site" description="Proton donor/acceptor" evidence="1">
    <location>
        <position position="60"/>
    </location>
</feature>
<feature type="binding site" evidence="1">
    <location>
        <position position="8"/>
    </location>
    <ligand>
        <name>substrate</name>
    </ligand>
</feature>
<feature type="binding site" evidence="1">
    <location>
        <position position="12"/>
    </location>
    <ligand>
        <name>substrate</name>
    </ligand>
</feature>
<feature type="binding site" evidence="1">
    <location>
        <begin position="34"/>
        <end position="37"/>
    </location>
    <ligand>
        <name>substrate</name>
    </ligand>
</feature>
<feature type="binding site" evidence="1">
    <location>
        <begin position="54"/>
        <end position="55"/>
    </location>
    <ligand>
        <name>substrate</name>
    </ligand>
</feature>
<feature type="binding site" evidence="1">
    <location>
        <position position="87"/>
    </location>
    <ligand>
        <name>substrate</name>
    </ligand>
</feature>
<reference key="1">
    <citation type="journal article" date="2006" name="Genome Res.">
        <title>Skewed genomic variability in strains of the toxigenic bacterial pathogen, Clostridium perfringens.</title>
        <authorList>
            <person name="Myers G.S.A."/>
            <person name="Rasko D.A."/>
            <person name="Cheung J.K."/>
            <person name="Ravel J."/>
            <person name="Seshadri R."/>
            <person name="DeBoy R.T."/>
            <person name="Ren Q."/>
            <person name="Varga J."/>
            <person name="Awad M.M."/>
            <person name="Brinkac L.M."/>
            <person name="Daugherty S.C."/>
            <person name="Haft D.H."/>
            <person name="Dodson R.J."/>
            <person name="Madupu R."/>
            <person name="Nelson W.C."/>
            <person name="Rosovitz M.J."/>
            <person name="Sullivan S.A."/>
            <person name="Khouri H."/>
            <person name="Dimitrov G.I."/>
            <person name="Watkins K.L."/>
            <person name="Mulligan S."/>
            <person name="Benton J."/>
            <person name="Radune D."/>
            <person name="Fisher D.J."/>
            <person name="Atkins H.S."/>
            <person name="Hiscox T."/>
            <person name="Jost B.H."/>
            <person name="Billington S.J."/>
            <person name="Songer J.G."/>
            <person name="McClane B.A."/>
            <person name="Titball R.W."/>
            <person name="Rood J.I."/>
            <person name="Melville S.B."/>
            <person name="Paulsen I.T."/>
        </authorList>
    </citation>
    <scope>NUCLEOTIDE SEQUENCE [LARGE SCALE GENOMIC DNA]</scope>
    <source>
        <strain>SM101 / Type A</strain>
    </source>
</reference>
<keyword id="KW-0456">Lyase</keyword>
<comment type="function">
    <text evidence="1">Catalyzes the formation of methylglyoxal from dihydroxyacetone phosphate.</text>
</comment>
<comment type="catalytic activity">
    <reaction evidence="1">
        <text>dihydroxyacetone phosphate = methylglyoxal + phosphate</text>
        <dbReference type="Rhea" id="RHEA:17937"/>
        <dbReference type="ChEBI" id="CHEBI:17158"/>
        <dbReference type="ChEBI" id="CHEBI:43474"/>
        <dbReference type="ChEBI" id="CHEBI:57642"/>
        <dbReference type="EC" id="4.2.3.3"/>
    </reaction>
</comment>
<comment type="similarity">
    <text evidence="1">Belongs to the methylglyoxal synthase family.</text>
</comment>
<accession>Q0SU08</accession>